<sequence>MLVPKRVKHRKVQRGKMRGEAKGGKTVTFGEFGLQALDSHWISNRQIEAARIAMTRYMKRGGKVWIKIFPHLSYTSKGVGTRMGNGKGAPEGWVAPVKRMKVMFEVAGVPEEVAREALRLAGNKLPVRTKIVKREEVGGQSNED</sequence>
<proteinExistence type="inferred from homology"/>
<name>RL16_LIMF3</name>
<gene>
    <name evidence="1" type="primary">rplP</name>
    <name type="ordered locus">LAF_1508</name>
</gene>
<keyword id="KW-1185">Reference proteome</keyword>
<keyword id="KW-0687">Ribonucleoprotein</keyword>
<keyword id="KW-0689">Ribosomal protein</keyword>
<keyword id="KW-0694">RNA-binding</keyword>
<keyword id="KW-0699">rRNA-binding</keyword>
<keyword id="KW-0820">tRNA-binding</keyword>
<accession>B2GDW2</accession>
<organism>
    <name type="scientific">Limosilactobacillus fermentum (strain NBRC 3956 / LMG 18251)</name>
    <name type="common">Lactobacillus fermentum</name>
    <dbReference type="NCBI Taxonomy" id="334390"/>
    <lineage>
        <taxon>Bacteria</taxon>
        <taxon>Bacillati</taxon>
        <taxon>Bacillota</taxon>
        <taxon>Bacilli</taxon>
        <taxon>Lactobacillales</taxon>
        <taxon>Lactobacillaceae</taxon>
        <taxon>Limosilactobacillus</taxon>
    </lineage>
</organism>
<evidence type="ECO:0000255" key="1">
    <source>
        <dbReference type="HAMAP-Rule" id="MF_01342"/>
    </source>
</evidence>
<evidence type="ECO:0000256" key="2">
    <source>
        <dbReference type="SAM" id="MobiDB-lite"/>
    </source>
</evidence>
<evidence type="ECO:0000305" key="3"/>
<feature type="chain" id="PRO_1000142987" description="Large ribosomal subunit protein uL16">
    <location>
        <begin position="1"/>
        <end position="144"/>
    </location>
</feature>
<feature type="region of interest" description="Disordered" evidence="2">
    <location>
        <begin position="1"/>
        <end position="20"/>
    </location>
</feature>
<feature type="compositionally biased region" description="Basic residues" evidence="2">
    <location>
        <begin position="1"/>
        <end position="16"/>
    </location>
</feature>
<dbReference type="EMBL" id="AP008937">
    <property type="protein sequence ID" value="BAG27844.1"/>
    <property type="molecule type" value="Genomic_DNA"/>
</dbReference>
<dbReference type="RefSeq" id="WP_003681584.1">
    <property type="nucleotide sequence ID" value="NC_010610.1"/>
</dbReference>
<dbReference type="SMR" id="B2GDW2"/>
<dbReference type="GeneID" id="83716115"/>
<dbReference type="KEGG" id="lfe:LAF_1508"/>
<dbReference type="eggNOG" id="COG0197">
    <property type="taxonomic scope" value="Bacteria"/>
</dbReference>
<dbReference type="HOGENOM" id="CLU_078858_2_1_9"/>
<dbReference type="Proteomes" id="UP000001697">
    <property type="component" value="Chromosome"/>
</dbReference>
<dbReference type="GO" id="GO:0022625">
    <property type="term" value="C:cytosolic large ribosomal subunit"/>
    <property type="evidence" value="ECO:0007669"/>
    <property type="project" value="TreeGrafter"/>
</dbReference>
<dbReference type="GO" id="GO:0019843">
    <property type="term" value="F:rRNA binding"/>
    <property type="evidence" value="ECO:0007669"/>
    <property type="project" value="UniProtKB-UniRule"/>
</dbReference>
<dbReference type="GO" id="GO:0003735">
    <property type="term" value="F:structural constituent of ribosome"/>
    <property type="evidence" value="ECO:0007669"/>
    <property type="project" value="InterPro"/>
</dbReference>
<dbReference type="GO" id="GO:0000049">
    <property type="term" value="F:tRNA binding"/>
    <property type="evidence" value="ECO:0007669"/>
    <property type="project" value="UniProtKB-KW"/>
</dbReference>
<dbReference type="GO" id="GO:0006412">
    <property type="term" value="P:translation"/>
    <property type="evidence" value="ECO:0007669"/>
    <property type="project" value="UniProtKB-UniRule"/>
</dbReference>
<dbReference type="CDD" id="cd01433">
    <property type="entry name" value="Ribosomal_L16_L10e"/>
    <property type="match status" value="1"/>
</dbReference>
<dbReference type="FunFam" id="3.90.1170.10:FF:000001">
    <property type="entry name" value="50S ribosomal protein L16"/>
    <property type="match status" value="1"/>
</dbReference>
<dbReference type="Gene3D" id="3.90.1170.10">
    <property type="entry name" value="Ribosomal protein L10e/L16"/>
    <property type="match status" value="1"/>
</dbReference>
<dbReference type="HAMAP" id="MF_01342">
    <property type="entry name" value="Ribosomal_uL16"/>
    <property type="match status" value="1"/>
</dbReference>
<dbReference type="InterPro" id="IPR047873">
    <property type="entry name" value="Ribosomal_uL16"/>
</dbReference>
<dbReference type="InterPro" id="IPR000114">
    <property type="entry name" value="Ribosomal_uL16_bact-type"/>
</dbReference>
<dbReference type="InterPro" id="IPR020798">
    <property type="entry name" value="Ribosomal_uL16_CS"/>
</dbReference>
<dbReference type="InterPro" id="IPR016180">
    <property type="entry name" value="Ribosomal_uL16_dom"/>
</dbReference>
<dbReference type="InterPro" id="IPR036920">
    <property type="entry name" value="Ribosomal_uL16_sf"/>
</dbReference>
<dbReference type="NCBIfam" id="TIGR01164">
    <property type="entry name" value="rplP_bact"/>
    <property type="match status" value="1"/>
</dbReference>
<dbReference type="PANTHER" id="PTHR12220">
    <property type="entry name" value="50S/60S RIBOSOMAL PROTEIN L16"/>
    <property type="match status" value="1"/>
</dbReference>
<dbReference type="PANTHER" id="PTHR12220:SF13">
    <property type="entry name" value="LARGE RIBOSOMAL SUBUNIT PROTEIN UL16M"/>
    <property type="match status" value="1"/>
</dbReference>
<dbReference type="Pfam" id="PF00252">
    <property type="entry name" value="Ribosomal_L16"/>
    <property type="match status" value="1"/>
</dbReference>
<dbReference type="PRINTS" id="PR00060">
    <property type="entry name" value="RIBOSOMALL16"/>
</dbReference>
<dbReference type="SUPFAM" id="SSF54686">
    <property type="entry name" value="Ribosomal protein L16p/L10e"/>
    <property type="match status" value="1"/>
</dbReference>
<dbReference type="PROSITE" id="PS00586">
    <property type="entry name" value="RIBOSOMAL_L16_1"/>
    <property type="match status" value="1"/>
</dbReference>
<dbReference type="PROSITE" id="PS00701">
    <property type="entry name" value="RIBOSOMAL_L16_2"/>
    <property type="match status" value="1"/>
</dbReference>
<reference key="1">
    <citation type="journal article" date="2008" name="DNA Res.">
        <title>Comparative genome analysis of Lactobacillus reuteri and Lactobacillus fermentum reveal a genomic island for reuterin and cobalamin production.</title>
        <authorList>
            <person name="Morita H."/>
            <person name="Toh H."/>
            <person name="Fukuda S."/>
            <person name="Horikawa H."/>
            <person name="Oshima K."/>
            <person name="Suzuki T."/>
            <person name="Murakami M."/>
            <person name="Hisamatsu S."/>
            <person name="Kato Y."/>
            <person name="Takizawa T."/>
            <person name="Fukuoka H."/>
            <person name="Yoshimura T."/>
            <person name="Itoh K."/>
            <person name="O'Sullivan D.J."/>
            <person name="McKay L.L."/>
            <person name="Ohno H."/>
            <person name="Kikuchi J."/>
            <person name="Masaoka T."/>
            <person name="Hattori M."/>
        </authorList>
    </citation>
    <scope>NUCLEOTIDE SEQUENCE [LARGE SCALE GENOMIC DNA]</scope>
    <source>
        <strain>NBRC 3956 / LMG 18251</strain>
    </source>
</reference>
<protein>
    <recommendedName>
        <fullName evidence="1">Large ribosomal subunit protein uL16</fullName>
    </recommendedName>
    <alternativeName>
        <fullName evidence="3">50S ribosomal protein L16</fullName>
    </alternativeName>
</protein>
<comment type="function">
    <text evidence="1">Binds 23S rRNA and is also seen to make contacts with the A and possibly P site tRNAs.</text>
</comment>
<comment type="subunit">
    <text evidence="1">Part of the 50S ribosomal subunit.</text>
</comment>
<comment type="similarity">
    <text evidence="1">Belongs to the universal ribosomal protein uL16 family.</text>
</comment>